<dbReference type="EC" id="1.15.1.1" evidence="2"/>
<dbReference type="EMBL" id="L25675">
    <property type="protein sequence ID" value="AAA16786.1"/>
    <property type="molecule type" value="Unassigned_DNA"/>
</dbReference>
<dbReference type="EMBL" id="AE004091">
    <property type="protein sequence ID" value="AAG07754.1"/>
    <property type="molecule type" value="Genomic_DNA"/>
</dbReference>
<dbReference type="PIR" id="B53294">
    <property type="entry name" value="B53294"/>
</dbReference>
<dbReference type="PIR" id="E83100">
    <property type="entry name" value="E83100"/>
</dbReference>
<dbReference type="RefSeq" id="NP_253056.1">
    <property type="nucleotide sequence ID" value="NC_002516.2"/>
</dbReference>
<dbReference type="RefSeq" id="WP_003094005.1">
    <property type="nucleotide sequence ID" value="NZ_QZGE01000004.1"/>
</dbReference>
<dbReference type="SMR" id="P53641"/>
<dbReference type="FunCoup" id="P53641">
    <property type="interactions" value="274"/>
</dbReference>
<dbReference type="STRING" id="208964.PA4366"/>
<dbReference type="PaxDb" id="208964-PA4366"/>
<dbReference type="GeneID" id="881397"/>
<dbReference type="KEGG" id="pae:PA4366"/>
<dbReference type="PATRIC" id="fig|208964.12.peg.4573"/>
<dbReference type="PseudoCAP" id="PA4366"/>
<dbReference type="HOGENOM" id="CLU_031625_0_0_6"/>
<dbReference type="InParanoid" id="P53641"/>
<dbReference type="OrthoDB" id="9803125at2"/>
<dbReference type="PhylomeDB" id="P53641"/>
<dbReference type="BioCyc" id="PAER208964:G1FZ6-4452-MONOMER"/>
<dbReference type="Proteomes" id="UP000002438">
    <property type="component" value="Chromosome"/>
</dbReference>
<dbReference type="GO" id="GO:0046872">
    <property type="term" value="F:metal ion binding"/>
    <property type="evidence" value="ECO:0007669"/>
    <property type="project" value="UniProtKB-KW"/>
</dbReference>
<dbReference type="GO" id="GO:0004784">
    <property type="term" value="F:superoxide dismutase activity"/>
    <property type="evidence" value="ECO:0007669"/>
    <property type="project" value="UniProtKB-EC"/>
</dbReference>
<dbReference type="FunFam" id="1.10.287.990:FF:000002">
    <property type="entry name" value="Superoxide dismutase"/>
    <property type="match status" value="1"/>
</dbReference>
<dbReference type="FunFam" id="3.55.40.20:FF:000001">
    <property type="entry name" value="Superoxide dismutase"/>
    <property type="match status" value="1"/>
</dbReference>
<dbReference type="Gene3D" id="1.10.287.990">
    <property type="entry name" value="Fe,Mn superoxide dismutase (SOD) domain"/>
    <property type="match status" value="1"/>
</dbReference>
<dbReference type="Gene3D" id="3.55.40.20">
    <property type="entry name" value="Iron/manganese superoxide dismutase, C-terminal domain"/>
    <property type="match status" value="1"/>
</dbReference>
<dbReference type="InterPro" id="IPR001189">
    <property type="entry name" value="Mn/Fe_SOD"/>
</dbReference>
<dbReference type="InterPro" id="IPR019833">
    <property type="entry name" value="Mn/Fe_SOD_BS"/>
</dbReference>
<dbReference type="InterPro" id="IPR019832">
    <property type="entry name" value="Mn/Fe_SOD_C"/>
</dbReference>
<dbReference type="InterPro" id="IPR019831">
    <property type="entry name" value="Mn/Fe_SOD_N"/>
</dbReference>
<dbReference type="InterPro" id="IPR036324">
    <property type="entry name" value="Mn/Fe_SOD_N_sf"/>
</dbReference>
<dbReference type="InterPro" id="IPR036314">
    <property type="entry name" value="SOD_C_sf"/>
</dbReference>
<dbReference type="NCBIfam" id="NF007832">
    <property type="entry name" value="PRK10543.1"/>
    <property type="match status" value="1"/>
</dbReference>
<dbReference type="PANTHER" id="PTHR42769">
    <property type="entry name" value="SUPEROXIDE DISMUTASE"/>
    <property type="match status" value="1"/>
</dbReference>
<dbReference type="PANTHER" id="PTHR42769:SF3">
    <property type="entry name" value="SUPEROXIDE DISMUTASE [FE] 2, CHLOROPLASTIC"/>
    <property type="match status" value="1"/>
</dbReference>
<dbReference type="Pfam" id="PF02777">
    <property type="entry name" value="Sod_Fe_C"/>
    <property type="match status" value="1"/>
</dbReference>
<dbReference type="Pfam" id="PF00081">
    <property type="entry name" value="Sod_Fe_N"/>
    <property type="match status" value="1"/>
</dbReference>
<dbReference type="PIRSF" id="PIRSF000349">
    <property type="entry name" value="SODismutase"/>
    <property type="match status" value="1"/>
</dbReference>
<dbReference type="PRINTS" id="PR01703">
    <property type="entry name" value="MNSODISMTASE"/>
</dbReference>
<dbReference type="SUPFAM" id="SSF54719">
    <property type="entry name" value="Fe,Mn superoxide dismutase (SOD), C-terminal domain"/>
    <property type="match status" value="1"/>
</dbReference>
<dbReference type="SUPFAM" id="SSF46609">
    <property type="entry name" value="Fe,Mn superoxide dismutase (SOD), N-terminal domain"/>
    <property type="match status" value="1"/>
</dbReference>
<dbReference type="PROSITE" id="PS00088">
    <property type="entry name" value="SOD_MN"/>
    <property type="match status" value="1"/>
</dbReference>
<reference key="1">
    <citation type="journal article" date="1993" name="J. Bacteriol.">
        <title>Cloning and characterization of the Pseudomonas aeruginosa sodA and sodB genes encoding manganese- and iron-cofactored superoxide dismutase: demonstration of increased manganese superoxide dismutase activity in alginate-producing bacteria.</title>
        <authorList>
            <person name="Hassett D.J."/>
            <person name="Woodruff W.A."/>
            <person name="Wozniak D.J."/>
            <person name="Vasil M.L."/>
            <person name="Cohen M.S."/>
            <person name="Ohman D.E."/>
        </authorList>
    </citation>
    <scope>NUCLEOTIDE SEQUENCE [GENOMIC DNA]</scope>
    <scope>FUNCTION</scope>
    <scope>CATALYTIC ACTIVITY</scope>
    <scope>INDUCTION</scope>
    <source>
        <strain>FRD1</strain>
    </source>
</reference>
<reference key="2">
    <citation type="journal article" date="1996" name="Biochem. Biophys. Res. Commun.">
        <title>The Pseudomonas aeruginosa fumC and sodA genes belong to an iron-responsive operon.</title>
        <authorList>
            <person name="Polack B."/>
            <person name="Dacheux D."/>
            <person name="Delic-Attree I."/>
            <person name="Toussaint B."/>
            <person name="Vignais P.M."/>
        </authorList>
    </citation>
    <scope>CATALYTIC ACTIVITY</scope>
    <scope>INDUCTION</scope>
    <source>
        <strain>CHA</strain>
    </source>
</reference>
<reference key="3">
    <citation type="journal article" date="2000" name="Nature">
        <title>Complete genome sequence of Pseudomonas aeruginosa PAO1, an opportunistic pathogen.</title>
        <authorList>
            <person name="Stover C.K."/>
            <person name="Pham X.-Q.T."/>
            <person name="Erwin A.L."/>
            <person name="Mizoguchi S.D."/>
            <person name="Warrener P."/>
            <person name="Hickey M.J."/>
            <person name="Brinkman F.S.L."/>
            <person name="Hufnagle W.O."/>
            <person name="Kowalik D.J."/>
            <person name="Lagrou M."/>
            <person name="Garber R.L."/>
            <person name="Goltry L."/>
            <person name="Tolentino E."/>
            <person name="Westbrock-Wadman S."/>
            <person name="Yuan Y."/>
            <person name="Brody L.L."/>
            <person name="Coulter S.N."/>
            <person name="Folger K.R."/>
            <person name="Kas A."/>
            <person name="Larbig K."/>
            <person name="Lim R.M."/>
            <person name="Smith K.A."/>
            <person name="Spencer D.H."/>
            <person name="Wong G.K.-S."/>
            <person name="Wu Z."/>
            <person name="Paulsen I.T."/>
            <person name="Reizer J."/>
            <person name="Saier M.H. Jr."/>
            <person name="Hancock R.E.W."/>
            <person name="Lory S."/>
            <person name="Olson M.V."/>
        </authorList>
    </citation>
    <scope>NUCLEOTIDE SEQUENCE [LARGE SCALE GENOMIC DNA]</scope>
    <source>
        <strain>ATCC 15692 / DSM 22644 / CIP 104116 / JCM 14847 / LMG 12228 / 1C / PRS 101 / PAO1</strain>
    </source>
</reference>
<name>SODF_PSEAE</name>
<proteinExistence type="evidence at protein level"/>
<organism>
    <name type="scientific">Pseudomonas aeruginosa (strain ATCC 15692 / DSM 22644 / CIP 104116 / JCM 14847 / LMG 12228 / 1C / PRS 101 / PAO1)</name>
    <dbReference type="NCBI Taxonomy" id="208964"/>
    <lineage>
        <taxon>Bacteria</taxon>
        <taxon>Pseudomonadati</taxon>
        <taxon>Pseudomonadota</taxon>
        <taxon>Gammaproteobacteria</taxon>
        <taxon>Pseudomonadales</taxon>
        <taxon>Pseudomonadaceae</taxon>
        <taxon>Pseudomonas</taxon>
    </lineage>
</organism>
<protein>
    <recommendedName>
        <fullName>Superoxide dismutase [Fe]</fullName>
        <ecNumber evidence="2">1.15.1.1</ecNumber>
    </recommendedName>
</protein>
<sequence>MAFELPPLPYEKNALEPHISAETLEYHHDKHHNTYVVNLNNLIPGTEFEGKSLEEIVKSSSGGIFNNAAQVWNHTFYWNCLSPNGGGQPTGALADAINAAFGSFDKFKEEFTKTSVGTFGSGWGWLVKKADGSLALASTIGAGNPLTSGDTPLLTCDVWEHAYYIDYRNLRPKYVEAFWNLVNWDFVAKNFAA</sequence>
<accession>P53641</accession>
<keyword id="KW-0408">Iron</keyword>
<keyword id="KW-0479">Metal-binding</keyword>
<keyword id="KW-0560">Oxidoreductase</keyword>
<keyword id="KW-1185">Reference proteome</keyword>
<feature type="initiator methionine" description="Removed" evidence="1">
    <location>
        <position position="1"/>
    </location>
</feature>
<feature type="chain" id="PRO_0000159994" description="Superoxide dismutase [Fe]">
    <location>
        <begin position="2"/>
        <end position="193"/>
    </location>
</feature>
<feature type="binding site" evidence="1">
    <location>
        <position position="27"/>
    </location>
    <ligand>
        <name>Fe cation</name>
        <dbReference type="ChEBI" id="CHEBI:24875"/>
    </ligand>
</feature>
<feature type="binding site" evidence="1">
    <location>
        <position position="74"/>
    </location>
    <ligand>
        <name>Fe cation</name>
        <dbReference type="ChEBI" id="CHEBI:24875"/>
    </ligand>
</feature>
<feature type="binding site" evidence="1">
    <location>
        <position position="157"/>
    </location>
    <ligand>
        <name>Fe cation</name>
        <dbReference type="ChEBI" id="CHEBI:24875"/>
    </ligand>
</feature>
<feature type="binding site" evidence="1">
    <location>
        <position position="161"/>
    </location>
    <ligand>
        <name>Fe cation</name>
        <dbReference type="ChEBI" id="CHEBI:24875"/>
    </ligand>
</feature>
<feature type="sequence conflict" description="In Ref. 1; AAA16786." evidence="5" ref="1">
    <original>KH</original>
    <variation>NN</variation>
    <location>
        <begin position="30"/>
        <end position="31"/>
    </location>
</feature>
<feature type="sequence conflict" description="In Ref. 1; AAA16786." evidence="5" ref="1">
    <original>N</original>
    <variation>T</variation>
    <location>
        <position position="40"/>
    </location>
</feature>
<feature type="sequence conflict" description="In Ref. 1; AAA16786." evidence="5" ref="1">
    <original>A</original>
    <variation>G</variation>
    <location>
        <position position="92"/>
    </location>
</feature>
<feature type="sequence conflict" description="In Ref. 1; AAA16786." evidence="5" ref="1">
    <original>A</original>
    <variation>G</variation>
    <location>
        <position position="100"/>
    </location>
</feature>
<feature type="sequence conflict" description="In Ref. 1; AAA16786." evidence="5" ref="1">
    <original>TFGSGW</original>
    <variation>HLRFRS</variation>
    <location>
        <begin position="118"/>
        <end position="123"/>
    </location>
</feature>
<feature type="sequence conflict" description="In Ref. 1; AAA16786." evidence="5" ref="1">
    <original>A</original>
    <variation>P</variation>
    <location>
        <position position="130"/>
    </location>
</feature>
<feature type="sequence conflict" description="In Ref. 1; AAA16786." evidence="5" ref="1">
    <original>NLRPKYVE</original>
    <variation>TASEVRR</variation>
    <location>
        <begin position="169"/>
        <end position="176"/>
    </location>
</feature>
<comment type="function">
    <text evidence="2 6">Destroys superoxide anion radicals which are normally produced within the cells and which are toxic to biological systems (Probable). Partially complements double sodA-sodB deletions in E.coli (PubMed:8244935).</text>
</comment>
<comment type="catalytic activity">
    <reaction evidence="2 3">
        <text>2 superoxide + 2 H(+) = H2O2 + O2</text>
        <dbReference type="Rhea" id="RHEA:20696"/>
        <dbReference type="ChEBI" id="CHEBI:15378"/>
        <dbReference type="ChEBI" id="CHEBI:15379"/>
        <dbReference type="ChEBI" id="CHEBI:16240"/>
        <dbReference type="ChEBI" id="CHEBI:18421"/>
        <dbReference type="EC" id="1.15.1.1"/>
    </reaction>
</comment>
<comment type="cofactor">
    <cofactor evidence="1">
        <name>Fe cation</name>
        <dbReference type="ChEBI" id="CHEBI:24875"/>
    </cofactor>
    <text evidence="1">Binds 1 Fe cation per subunit.</text>
</comment>
<comment type="subunit">
    <text evidence="1">Homodimer.</text>
</comment>
<comment type="induction">
    <text evidence="2 3">By growth in a high-phosphate succinate medium (at protein level) (PubMed:8244935). Strongly induced by growth on medium containing FeSO(4) (at protein level) (PubMed:8806672).</text>
</comment>
<comment type="similarity">
    <text evidence="5">Belongs to the iron/manganese superoxide dismutase family.</text>
</comment>
<evidence type="ECO:0000250" key="1"/>
<evidence type="ECO:0000269" key="2">
    <source>
    </source>
</evidence>
<evidence type="ECO:0000269" key="3">
    <source>
    </source>
</evidence>
<evidence type="ECO:0000303" key="4">
    <source>
    </source>
</evidence>
<evidence type="ECO:0000305" key="5"/>
<evidence type="ECO:0000305" key="6">
    <source>
    </source>
</evidence>
<gene>
    <name evidence="4" type="primary">sodB</name>
    <name type="ordered locus">PA4366</name>
</gene>